<organism>
    <name type="scientific">Casuarius bennetti</name>
    <name type="common">Dwarf cassowary</name>
    <dbReference type="NCBI Taxonomy" id="30463"/>
    <lineage>
        <taxon>Eukaryota</taxon>
        <taxon>Metazoa</taxon>
        <taxon>Chordata</taxon>
        <taxon>Craniata</taxon>
        <taxon>Vertebrata</taxon>
        <taxon>Euteleostomi</taxon>
        <taxon>Archelosauria</taxon>
        <taxon>Archosauria</taxon>
        <taxon>Dinosauria</taxon>
        <taxon>Saurischia</taxon>
        <taxon>Theropoda</taxon>
        <taxon>Coelurosauria</taxon>
        <taxon>Aves</taxon>
        <taxon>Palaeognathae</taxon>
        <taxon>Casuariiformes</taxon>
        <taxon>Casuariidae</taxon>
        <taxon>Casuarius</taxon>
    </lineage>
</organism>
<evidence type="ECO:0000250" key="1">
    <source>
        <dbReference type="UniProtKB" id="P00403"/>
    </source>
</evidence>
<evidence type="ECO:0000250" key="2">
    <source>
        <dbReference type="UniProtKB" id="P00410"/>
    </source>
</evidence>
<evidence type="ECO:0000250" key="3">
    <source>
        <dbReference type="UniProtKB" id="P68530"/>
    </source>
</evidence>
<evidence type="ECO:0000305" key="4"/>
<reference key="1">
    <citation type="book" date="1997" name="Avian molecular evolution and systematics">
        <title>Phylogenetic relationships of the ratite birds: resolving conflicts between molecular and morphological data sets.</title>
        <editorList>
            <person name="Mindell D.P."/>
        </editorList>
        <authorList>
            <person name="Lee K."/>
            <person name="Feinstein J."/>
            <person name="Cracraft J."/>
        </authorList>
    </citation>
    <scope>NUCLEOTIDE SEQUENCE [GENOMIC DNA]</scope>
</reference>
<accession>O03890</accession>
<sequence length="199" mass="22378">AICSLVLYLLTLMLMEKLSSNTVDAQEVELIWTILPAIVLILLALPSLQILYMMDEIDEPDLTLKAIGHQWYWTYEYTDFKDLSFDSYMVPTSELPSGHFRLLEVDHRVVVPMESPIRVIITAGDVLHSWAVPTLGVKTDAIPGRLNQTSFITTRPGIFYGQCSEICGANHSYMPIVVESTPLTHFENWSSLLSISSSL</sequence>
<dbReference type="EC" id="7.1.1.9"/>
<dbReference type="EMBL" id="U76065">
    <property type="protein sequence ID" value="AAB61317.1"/>
    <property type="molecule type" value="Genomic_DNA"/>
</dbReference>
<dbReference type="SMR" id="O03890"/>
<dbReference type="GO" id="GO:0005743">
    <property type="term" value="C:mitochondrial inner membrane"/>
    <property type="evidence" value="ECO:0007669"/>
    <property type="project" value="UniProtKB-SubCell"/>
</dbReference>
<dbReference type="GO" id="GO:0045277">
    <property type="term" value="C:respiratory chain complex IV"/>
    <property type="evidence" value="ECO:0000250"/>
    <property type="project" value="UniProtKB"/>
</dbReference>
<dbReference type="GO" id="GO:0005507">
    <property type="term" value="F:copper ion binding"/>
    <property type="evidence" value="ECO:0007669"/>
    <property type="project" value="InterPro"/>
</dbReference>
<dbReference type="GO" id="GO:0004129">
    <property type="term" value="F:cytochrome-c oxidase activity"/>
    <property type="evidence" value="ECO:0007669"/>
    <property type="project" value="UniProtKB-EC"/>
</dbReference>
<dbReference type="GO" id="GO:0042773">
    <property type="term" value="P:ATP synthesis coupled electron transport"/>
    <property type="evidence" value="ECO:0007669"/>
    <property type="project" value="TreeGrafter"/>
</dbReference>
<dbReference type="CDD" id="cd13912">
    <property type="entry name" value="CcO_II_C"/>
    <property type="match status" value="1"/>
</dbReference>
<dbReference type="FunFam" id="2.60.40.420:FF:000001">
    <property type="entry name" value="Cytochrome c oxidase subunit 2"/>
    <property type="match status" value="1"/>
</dbReference>
<dbReference type="Gene3D" id="1.10.287.90">
    <property type="match status" value="1"/>
</dbReference>
<dbReference type="Gene3D" id="2.60.40.420">
    <property type="entry name" value="Cupredoxins - blue copper proteins"/>
    <property type="match status" value="1"/>
</dbReference>
<dbReference type="InterPro" id="IPR045187">
    <property type="entry name" value="CcO_II"/>
</dbReference>
<dbReference type="InterPro" id="IPR002429">
    <property type="entry name" value="CcO_II-like_C"/>
</dbReference>
<dbReference type="InterPro" id="IPR034210">
    <property type="entry name" value="CcO_II_C"/>
</dbReference>
<dbReference type="InterPro" id="IPR001505">
    <property type="entry name" value="Copper_CuA"/>
</dbReference>
<dbReference type="InterPro" id="IPR008972">
    <property type="entry name" value="Cupredoxin"/>
</dbReference>
<dbReference type="InterPro" id="IPR014222">
    <property type="entry name" value="Cyt_c_oxidase_su2"/>
</dbReference>
<dbReference type="InterPro" id="IPR011759">
    <property type="entry name" value="Cyt_c_oxidase_su2_TM_dom"/>
</dbReference>
<dbReference type="InterPro" id="IPR036257">
    <property type="entry name" value="Cyt_c_oxidase_su2_TM_sf"/>
</dbReference>
<dbReference type="NCBIfam" id="TIGR02866">
    <property type="entry name" value="CoxB"/>
    <property type="match status" value="1"/>
</dbReference>
<dbReference type="PANTHER" id="PTHR22888:SF9">
    <property type="entry name" value="CYTOCHROME C OXIDASE SUBUNIT 2"/>
    <property type="match status" value="1"/>
</dbReference>
<dbReference type="PANTHER" id="PTHR22888">
    <property type="entry name" value="CYTOCHROME C OXIDASE, SUBUNIT II"/>
    <property type="match status" value="1"/>
</dbReference>
<dbReference type="Pfam" id="PF00116">
    <property type="entry name" value="COX2"/>
    <property type="match status" value="1"/>
</dbReference>
<dbReference type="Pfam" id="PF02790">
    <property type="entry name" value="COX2_TM"/>
    <property type="match status" value="1"/>
</dbReference>
<dbReference type="PRINTS" id="PR01166">
    <property type="entry name" value="CYCOXIDASEII"/>
</dbReference>
<dbReference type="SUPFAM" id="SSF49503">
    <property type="entry name" value="Cupredoxins"/>
    <property type="match status" value="1"/>
</dbReference>
<dbReference type="SUPFAM" id="SSF81464">
    <property type="entry name" value="Cytochrome c oxidase subunit II-like, transmembrane region"/>
    <property type="match status" value="1"/>
</dbReference>
<dbReference type="PROSITE" id="PS00078">
    <property type="entry name" value="COX2"/>
    <property type="match status" value="1"/>
</dbReference>
<dbReference type="PROSITE" id="PS50857">
    <property type="entry name" value="COX2_CUA"/>
    <property type="match status" value="1"/>
</dbReference>
<dbReference type="PROSITE" id="PS50999">
    <property type="entry name" value="COX2_TM"/>
    <property type="match status" value="1"/>
</dbReference>
<keyword id="KW-0186">Copper</keyword>
<keyword id="KW-0249">Electron transport</keyword>
<keyword id="KW-0460">Magnesium</keyword>
<keyword id="KW-0472">Membrane</keyword>
<keyword id="KW-0479">Metal-binding</keyword>
<keyword id="KW-0496">Mitochondrion</keyword>
<keyword id="KW-0999">Mitochondrion inner membrane</keyword>
<keyword id="KW-0679">Respiratory chain</keyword>
<keyword id="KW-1278">Translocase</keyword>
<keyword id="KW-0812">Transmembrane</keyword>
<keyword id="KW-1133">Transmembrane helix</keyword>
<keyword id="KW-0813">Transport</keyword>
<name>COX2_CASBE</name>
<gene>
    <name type="primary">MT-CO2</name>
    <name type="synonym">COII</name>
    <name type="synonym">COXII</name>
    <name type="synonym">MTCO2</name>
</gene>
<comment type="function">
    <text evidence="2">Component of the cytochrome c oxidase, the last enzyme in the mitochondrial electron transport chain which drives oxidative phosphorylation. The respiratory chain contains 3 multisubunit complexes succinate dehydrogenase (complex II, CII), ubiquinol-cytochrome c oxidoreductase (cytochrome b-c1 complex, complex III, CIII) and cytochrome c oxidase (complex IV, CIV), that cooperate to transfer electrons derived from NADH and succinate to molecular oxygen, creating an electrochemical gradient over the inner membrane that drives transmembrane transport and the ATP synthase. Cytochrome c oxidase is the component of the respiratory chain that catalyzes the reduction of oxygen to water. Electrons originating from reduced cytochrome c in the intermembrane space (IMS) are transferred via the dinuclear copper A center (CU(A)) of subunit 2 and heme A of subunit 1 to the active site in subunit 1, a binuclear center (BNC) formed by heme A3 and copper B (CU(B)). The BNC reduces molecular oxygen to 2 water molecules using 4 electrons from cytochrome c in the IMS and 4 protons from the mitochondrial matrix.</text>
</comment>
<comment type="catalytic activity">
    <reaction evidence="2">
        <text>4 Fe(II)-[cytochrome c] + O2 + 8 H(+)(in) = 4 Fe(III)-[cytochrome c] + 2 H2O + 4 H(+)(out)</text>
        <dbReference type="Rhea" id="RHEA:11436"/>
        <dbReference type="Rhea" id="RHEA-COMP:10350"/>
        <dbReference type="Rhea" id="RHEA-COMP:14399"/>
        <dbReference type="ChEBI" id="CHEBI:15377"/>
        <dbReference type="ChEBI" id="CHEBI:15378"/>
        <dbReference type="ChEBI" id="CHEBI:15379"/>
        <dbReference type="ChEBI" id="CHEBI:29033"/>
        <dbReference type="ChEBI" id="CHEBI:29034"/>
        <dbReference type="EC" id="7.1.1.9"/>
    </reaction>
    <physiologicalReaction direction="left-to-right" evidence="2">
        <dbReference type="Rhea" id="RHEA:11437"/>
    </physiologicalReaction>
</comment>
<comment type="cofactor">
    <cofactor evidence="3">
        <name>Cu cation</name>
        <dbReference type="ChEBI" id="CHEBI:23378"/>
    </cofactor>
    <text evidence="3">Binds a dinuclear copper A center per subunit.</text>
</comment>
<comment type="subunit">
    <text evidence="1 3">Component of the cytochrome c oxidase (complex IV, CIV), a multisubunit enzyme composed of 14 subunits. The complex is composed of a catalytic core of 3 subunits MT-CO1, MT-CO2 and MT-CO3, encoded in the mitochondrial DNA, and 11 supernumerary subunits COX4I, COX5A, COX5B, COX6A, COX6B, COX6C, COX7A, COX7B, COX7C, COX8 and NDUFA4, which are encoded in the nuclear genome. The complex exists as a monomer or a dimer and forms supercomplexes (SCs) in the inner mitochondrial membrane with NADH-ubiquinone oxidoreductase (complex I, CI) and ubiquinol-cytochrome c oxidoreductase (cytochrome b-c1 complex, complex III, CIII), resulting in different assemblies (supercomplex SCI(1)III(2)IV(1) and megacomplex MCI(2)III(2)IV(2)) (By similarity). Found in a complex with TMEM177, COA6, COX18, COX20, SCO1 and SCO2. Interacts with TMEM177 in a COX20-dependent manner. Interacts with COX20. Interacts with COX16 (By similarity).</text>
</comment>
<comment type="subcellular location">
    <subcellularLocation>
        <location evidence="3">Mitochondrion inner membrane</location>
        <topology evidence="3">Multi-pass membrane protein</topology>
    </subcellularLocation>
</comment>
<comment type="similarity">
    <text evidence="4">Belongs to the cytochrome c oxidase subunit 2 family.</text>
</comment>
<proteinExistence type="inferred from homology"/>
<protein>
    <recommendedName>
        <fullName>Cytochrome c oxidase subunit 2</fullName>
        <ecNumber>7.1.1.9</ecNumber>
    </recommendedName>
    <alternativeName>
        <fullName>Cytochrome c oxidase polypeptide II</fullName>
    </alternativeName>
</protein>
<feature type="chain" id="PRO_0000183540" description="Cytochrome c oxidase subunit 2">
    <location>
        <begin position="1" status="less than"/>
        <end position="199"/>
    </location>
</feature>
<feature type="transmembrane region" description="Helical; Name=I" evidence="3">
    <location>
        <begin position="1" status="less than"/>
        <end position="13"/>
    </location>
</feature>
<feature type="topological domain" description="Mitochondrial matrix" evidence="3">
    <location>
        <begin position="14"/>
        <end position="26"/>
    </location>
</feature>
<feature type="transmembrane region" description="Helical; Name=II" evidence="3">
    <location>
        <begin position="27"/>
        <end position="54"/>
    </location>
</feature>
<feature type="topological domain" description="Mitochondrial intermembrane" evidence="3">
    <location>
        <begin position="55"/>
        <end position="199"/>
    </location>
</feature>
<feature type="binding site" evidence="3">
    <location>
        <position position="128"/>
    </location>
    <ligand>
        <name>Cu cation</name>
        <dbReference type="ChEBI" id="CHEBI:23378"/>
        <label>A1</label>
    </ligand>
</feature>
<feature type="binding site" evidence="3">
    <location>
        <position position="163"/>
    </location>
    <ligand>
        <name>Cu cation</name>
        <dbReference type="ChEBI" id="CHEBI:23378"/>
        <label>A1</label>
    </ligand>
</feature>
<feature type="binding site" evidence="3">
    <location>
        <position position="163"/>
    </location>
    <ligand>
        <name>Cu cation</name>
        <dbReference type="ChEBI" id="CHEBI:23378"/>
        <label>A2</label>
    </ligand>
</feature>
<feature type="binding site" evidence="3">
    <location>
        <position position="165"/>
    </location>
    <ligand>
        <name>Cu cation</name>
        <dbReference type="ChEBI" id="CHEBI:23378"/>
        <label>A2</label>
    </ligand>
</feature>
<feature type="binding site" evidence="3">
    <location>
        <position position="165"/>
    </location>
    <ligand>
        <name>Mg(2+)</name>
        <dbReference type="ChEBI" id="CHEBI:18420"/>
        <note>ligand shared with MT-CO1</note>
    </ligand>
</feature>
<feature type="binding site" evidence="3">
    <location>
        <position position="167"/>
    </location>
    <ligand>
        <name>Cu cation</name>
        <dbReference type="ChEBI" id="CHEBI:23378"/>
        <label>A1</label>
    </ligand>
</feature>
<feature type="binding site" evidence="3">
    <location>
        <position position="167"/>
    </location>
    <ligand>
        <name>Cu cation</name>
        <dbReference type="ChEBI" id="CHEBI:23378"/>
        <label>A2</label>
    </ligand>
</feature>
<feature type="binding site" evidence="3">
    <location>
        <position position="171"/>
    </location>
    <ligand>
        <name>Cu cation</name>
        <dbReference type="ChEBI" id="CHEBI:23378"/>
        <label>A2</label>
    </ligand>
</feature>
<feature type="binding site" evidence="3">
    <location>
        <position position="174"/>
    </location>
    <ligand>
        <name>Cu cation</name>
        <dbReference type="ChEBI" id="CHEBI:23378"/>
        <label>A1</label>
    </ligand>
</feature>
<feature type="non-terminal residue">
    <location>
        <position position="1"/>
    </location>
</feature>
<geneLocation type="mitochondrion"/>